<reference key="1">
    <citation type="journal article" date="2008" name="Infect. Immun.">
        <title>Genomic comparison of virulent Rickettsia rickettsii Sheila Smith and avirulent Rickettsia rickettsii Iowa.</title>
        <authorList>
            <person name="Ellison D.W."/>
            <person name="Clark T.R."/>
            <person name="Sturdevant D.E."/>
            <person name="Virtaneva K."/>
            <person name="Porcella S.F."/>
            <person name="Hackstadt T."/>
        </authorList>
    </citation>
    <scope>NUCLEOTIDE SEQUENCE [LARGE SCALE GENOMIC DNA]</scope>
    <source>
        <strain>Iowa</strain>
    </source>
</reference>
<name>RBFA_RICRO</name>
<feature type="chain" id="PRO_1000073774" description="Ribosome-binding factor A">
    <location>
        <begin position="1"/>
        <end position="120"/>
    </location>
</feature>
<comment type="function">
    <text evidence="1">One of several proteins that assist in the late maturation steps of the functional core of the 30S ribosomal subunit. Associates with free 30S ribosomal subunits (but not with 30S subunits that are part of 70S ribosomes or polysomes). Required for efficient processing of 16S rRNA. May interact with the 5'-terminal helix region of 16S rRNA.</text>
</comment>
<comment type="subunit">
    <text evidence="1">Monomer. Binds 30S ribosomal subunits, but not 50S ribosomal subunits or 70S ribosomes.</text>
</comment>
<comment type="subcellular location">
    <subcellularLocation>
        <location evidence="1">Cytoplasm</location>
    </subcellularLocation>
</comment>
<comment type="similarity">
    <text evidence="1">Belongs to the RbfA family.</text>
</comment>
<accession>B0BXK5</accession>
<sequence length="120" mass="13952">MKKLTKTHSHRQQKLASIINEALIEILRRGKMLDSRLFDCPLTITKVIVTTDLKIANCYFLPFNTKLTIDEIMDALNNSKNAIRNFITNKIHMKFSPDIRFHYDHGFDNAIKVAHLLKDL</sequence>
<gene>
    <name evidence="1" type="primary">rbfA</name>
    <name type="ordered locus">RrIowa_0723</name>
</gene>
<protein>
    <recommendedName>
        <fullName evidence="1">Ribosome-binding factor A</fullName>
    </recommendedName>
</protein>
<proteinExistence type="inferred from homology"/>
<dbReference type="EMBL" id="CP000766">
    <property type="protein sequence ID" value="ABY72581.1"/>
    <property type="molecule type" value="Genomic_DNA"/>
</dbReference>
<dbReference type="RefSeq" id="WP_012150799.1">
    <property type="nucleotide sequence ID" value="NC_010263.3"/>
</dbReference>
<dbReference type="SMR" id="B0BXK5"/>
<dbReference type="GeneID" id="79937350"/>
<dbReference type="KEGG" id="rrj:RrIowa_0723"/>
<dbReference type="eggNOG" id="COG0858">
    <property type="taxonomic scope" value="Bacteria"/>
</dbReference>
<dbReference type="HOGENOM" id="CLU_089475_1_0_5"/>
<dbReference type="Proteomes" id="UP000000796">
    <property type="component" value="Chromosome"/>
</dbReference>
<dbReference type="GO" id="GO:0005829">
    <property type="term" value="C:cytosol"/>
    <property type="evidence" value="ECO:0007669"/>
    <property type="project" value="TreeGrafter"/>
</dbReference>
<dbReference type="GO" id="GO:0043024">
    <property type="term" value="F:ribosomal small subunit binding"/>
    <property type="evidence" value="ECO:0007669"/>
    <property type="project" value="TreeGrafter"/>
</dbReference>
<dbReference type="GO" id="GO:0030490">
    <property type="term" value="P:maturation of SSU-rRNA"/>
    <property type="evidence" value="ECO:0007669"/>
    <property type="project" value="UniProtKB-UniRule"/>
</dbReference>
<dbReference type="Gene3D" id="3.30.300.20">
    <property type="match status" value="1"/>
</dbReference>
<dbReference type="HAMAP" id="MF_00003">
    <property type="entry name" value="RbfA"/>
    <property type="match status" value="1"/>
</dbReference>
<dbReference type="InterPro" id="IPR015946">
    <property type="entry name" value="KH_dom-like_a/b"/>
</dbReference>
<dbReference type="InterPro" id="IPR000238">
    <property type="entry name" value="RbfA"/>
</dbReference>
<dbReference type="InterPro" id="IPR023799">
    <property type="entry name" value="RbfA_dom_sf"/>
</dbReference>
<dbReference type="InterPro" id="IPR020053">
    <property type="entry name" value="Ribosome-bd_factorA_CS"/>
</dbReference>
<dbReference type="NCBIfam" id="NF001799">
    <property type="entry name" value="PRK00521.2-2"/>
    <property type="match status" value="1"/>
</dbReference>
<dbReference type="NCBIfam" id="TIGR00082">
    <property type="entry name" value="rbfA"/>
    <property type="match status" value="1"/>
</dbReference>
<dbReference type="PANTHER" id="PTHR33515">
    <property type="entry name" value="RIBOSOME-BINDING FACTOR A, CHLOROPLASTIC-RELATED"/>
    <property type="match status" value="1"/>
</dbReference>
<dbReference type="PANTHER" id="PTHR33515:SF1">
    <property type="entry name" value="RIBOSOME-BINDING FACTOR A, CHLOROPLASTIC-RELATED"/>
    <property type="match status" value="1"/>
</dbReference>
<dbReference type="Pfam" id="PF02033">
    <property type="entry name" value="RBFA"/>
    <property type="match status" value="1"/>
</dbReference>
<dbReference type="SUPFAM" id="SSF89919">
    <property type="entry name" value="Ribosome-binding factor A, RbfA"/>
    <property type="match status" value="1"/>
</dbReference>
<dbReference type="PROSITE" id="PS01319">
    <property type="entry name" value="RBFA"/>
    <property type="match status" value="1"/>
</dbReference>
<organism>
    <name type="scientific">Rickettsia rickettsii (strain Iowa)</name>
    <dbReference type="NCBI Taxonomy" id="452659"/>
    <lineage>
        <taxon>Bacteria</taxon>
        <taxon>Pseudomonadati</taxon>
        <taxon>Pseudomonadota</taxon>
        <taxon>Alphaproteobacteria</taxon>
        <taxon>Rickettsiales</taxon>
        <taxon>Rickettsiaceae</taxon>
        <taxon>Rickettsieae</taxon>
        <taxon>Rickettsia</taxon>
        <taxon>spotted fever group</taxon>
    </lineage>
</organism>
<evidence type="ECO:0000255" key="1">
    <source>
        <dbReference type="HAMAP-Rule" id="MF_00003"/>
    </source>
</evidence>
<keyword id="KW-0963">Cytoplasm</keyword>
<keyword id="KW-0690">Ribosome biogenesis</keyword>